<comment type="function">
    <text evidence="1">Attaches a formyl group to the free amino group of methionyl-tRNA(fMet). The formyl group appears to play a dual role in the initiator identity of N-formylmethionyl-tRNA by promoting its recognition by IF2 and preventing the misappropriation of this tRNA by the elongation apparatus.</text>
</comment>
<comment type="catalytic activity">
    <reaction evidence="1">
        <text>L-methionyl-tRNA(fMet) + (6R)-10-formyltetrahydrofolate = N-formyl-L-methionyl-tRNA(fMet) + (6S)-5,6,7,8-tetrahydrofolate + H(+)</text>
        <dbReference type="Rhea" id="RHEA:24380"/>
        <dbReference type="Rhea" id="RHEA-COMP:9952"/>
        <dbReference type="Rhea" id="RHEA-COMP:9953"/>
        <dbReference type="ChEBI" id="CHEBI:15378"/>
        <dbReference type="ChEBI" id="CHEBI:57453"/>
        <dbReference type="ChEBI" id="CHEBI:78530"/>
        <dbReference type="ChEBI" id="CHEBI:78844"/>
        <dbReference type="ChEBI" id="CHEBI:195366"/>
        <dbReference type="EC" id="2.1.2.9"/>
    </reaction>
</comment>
<comment type="similarity">
    <text evidence="1">Belongs to the Fmt family.</text>
</comment>
<organism>
    <name type="scientific">Staphylococcus aureus (strain MW2)</name>
    <dbReference type="NCBI Taxonomy" id="196620"/>
    <lineage>
        <taxon>Bacteria</taxon>
        <taxon>Bacillati</taxon>
        <taxon>Bacillota</taxon>
        <taxon>Bacilli</taxon>
        <taxon>Bacillales</taxon>
        <taxon>Staphylococcaceae</taxon>
        <taxon>Staphylococcus</taxon>
    </lineage>
</organism>
<protein>
    <recommendedName>
        <fullName evidence="1">Methionyl-tRNA formyltransferase</fullName>
        <ecNumber evidence="1">2.1.2.9</ecNumber>
    </recommendedName>
</protein>
<keyword id="KW-0648">Protein biosynthesis</keyword>
<keyword id="KW-0808">Transferase</keyword>
<feature type="chain" id="PRO_0000083050" description="Methionyl-tRNA formyltransferase">
    <location>
        <begin position="1"/>
        <end position="311"/>
    </location>
</feature>
<feature type="binding site" evidence="1">
    <location>
        <begin position="109"/>
        <end position="112"/>
    </location>
    <ligand>
        <name>(6S)-5,6,7,8-tetrahydrofolate</name>
        <dbReference type="ChEBI" id="CHEBI:57453"/>
    </ligand>
</feature>
<reference key="1">
    <citation type="journal article" date="2002" name="Lancet">
        <title>Genome and virulence determinants of high virulence community-acquired MRSA.</title>
        <authorList>
            <person name="Baba T."/>
            <person name="Takeuchi F."/>
            <person name="Kuroda M."/>
            <person name="Yuzawa H."/>
            <person name="Aoki K."/>
            <person name="Oguchi A."/>
            <person name="Nagai Y."/>
            <person name="Iwama N."/>
            <person name="Asano K."/>
            <person name="Naimi T."/>
            <person name="Kuroda H."/>
            <person name="Cui L."/>
            <person name="Yamamoto K."/>
            <person name="Hiramatsu K."/>
        </authorList>
    </citation>
    <scope>NUCLEOTIDE SEQUENCE [LARGE SCALE GENOMIC DNA]</scope>
    <source>
        <strain>MW2</strain>
    </source>
</reference>
<evidence type="ECO:0000255" key="1">
    <source>
        <dbReference type="HAMAP-Rule" id="MF_00182"/>
    </source>
</evidence>
<accession>Q8NX18</accession>
<sequence>MTKIIFMGTPDFSTTVLEMLIAEHDVIAVVTQPDRPVGRKRVMTPPPVKKVAMKYDLPVYQPEKLSGSEELEQLLQLDVDLIVTAAFGQLLPESLLALPKLGAINVHASLLPKYRGGAPIHQAIIDGEQETGITIMYMVKKLDAGNIISQQAIKIEENDNVGTMHDKLSVLGADLLKETLPSIIEGTNESVPQDDTQATFASNIRREDERINWNKPGRQVFNQIRGLSPWPVAYTTMDDTNLKIYDAELVETNKINEPGTIIETTKKAIIVATNDNEAVAIKDMQLAGKKRMLAANYLSGAQNTLVGKKLI</sequence>
<name>FMT_STAAW</name>
<dbReference type="EC" id="2.1.2.9" evidence="1"/>
<dbReference type="EMBL" id="BA000033">
    <property type="protein sequence ID" value="BAB94964.1"/>
    <property type="molecule type" value="Genomic_DNA"/>
</dbReference>
<dbReference type="RefSeq" id="WP_000161286.1">
    <property type="nucleotide sequence ID" value="NC_003923.1"/>
</dbReference>
<dbReference type="SMR" id="Q8NX18"/>
<dbReference type="KEGG" id="sam:MW1099"/>
<dbReference type="HOGENOM" id="CLU_033347_1_1_9"/>
<dbReference type="GO" id="GO:0005829">
    <property type="term" value="C:cytosol"/>
    <property type="evidence" value="ECO:0007669"/>
    <property type="project" value="TreeGrafter"/>
</dbReference>
<dbReference type="GO" id="GO:0004479">
    <property type="term" value="F:methionyl-tRNA formyltransferase activity"/>
    <property type="evidence" value="ECO:0007669"/>
    <property type="project" value="UniProtKB-UniRule"/>
</dbReference>
<dbReference type="CDD" id="cd08646">
    <property type="entry name" value="FMT_core_Met-tRNA-FMT_N"/>
    <property type="match status" value="1"/>
</dbReference>
<dbReference type="CDD" id="cd08704">
    <property type="entry name" value="Met_tRNA_FMT_C"/>
    <property type="match status" value="1"/>
</dbReference>
<dbReference type="FunFam" id="3.40.50.170:FF:000004">
    <property type="entry name" value="Methionyl-tRNA formyltransferase"/>
    <property type="match status" value="1"/>
</dbReference>
<dbReference type="Gene3D" id="3.10.25.10">
    <property type="entry name" value="Formyl transferase, C-terminal domain"/>
    <property type="match status" value="1"/>
</dbReference>
<dbReference type="Gene3D" id="3.40.50.170">
    <property type="entry name" value="Formyl transferase, N-terminal domain"/>
    <property type="match status" value="1"/>
</dbReference>
<dbReference type="HAMAP" id="MF_00182">
    <property type="entry name" value="Formyl_trans"/>
    <property type="match status" value="1"/>
</dbReference>
<dbReference type="InterPro" id="IPR005794">
    <property type="entry name" value="Fmt"/>
</dbReference>
<dbReference type="InterPro" id="IPR005793">
    <property type="entry name" value="Formyl_trans_C"/>
</dbReference>
<dbReference type="InterPro" id="IPR037022">
    <property type="entry name" value="Formyl_trans_C_sf"/>
</dbReference>
<dbReference type="InterPro" id="IPR002376">
    <property type="entry name" value="Formyl_transf_N"/>
</dbReference>
<dbReference type="InterPro" id="IPR036477">
    <property type="entry name" value="Formyl_transf_N_sf"/>
</dbReference>
<dbReference type="InterPro" id="IPR011034">
    <property type="entry name" value="Formyl_transferase-like_C_sf"/>
</dbReference>
<dbReference type="InterPro" id="IPR001555">
    <property type="entry name" value="GART_AS"/>
</dbReference>
<dbReference type="InterPro" id="IPR044135">
    <property type="entry name" value="Met-tRNA-FMT_C"/>
</dbReference>
<dbReference type="InterPro" id="IPR041711">
    <property type="entry name" value="Met-tRNA-FMT_N"/>
</dbReference>
<dbReference type="NCBIfam" id="TIGR00460">
    <property type="entry name" value="fmt"/>
    <property type="match status" value="1"/>
</dbReference>
<dbReference type="PANTHER" id="PTHR11138">
    <property type="entry name" value="METHIONYL-TRNA FORMYLTRANSFERASE"/>
    <property type="match status" value="1"/>
</dbReference>
<dbReference type="PANTHER" id="PTHR11138:SF5">
    <property type="entry name" value="METHIONYL-TRNA FORMYLTRANSFERASE, MITOCHONDRIAL"/>
    <property type="match status" value="1"/>
</dbReference>
<dbReference type="Pfam" id="PF02911">
    <property type="entry name" value="Formyl_trans_C"/>
    <property type="match status" value="1"/>
</dbReference>
<dbReference type="Pfam" id="PF00551">
    <property type="entry name" value="Formyl_trans_N"/>
    <property type="match status" value="1"/>
</dbReference>
<dbReference type="SUPFAM" id="SSF50486">
    <property type="entry name" value="FMT C-terminal domain-like"/>
    <property type="match status" value="1"/>
</dbReference>
<dbReference type="SUPFAM" id="SSF53328">
    <property type="entry name" value="Formyltransferase"/>
    <property type="match status" value="1"/>
</dbReference>
<dbReference type="PROSITE" id="PS00373">
    <property type="entry name" value="GART"/>
    <property type="match status" value="1"/>
</dbReference>
<proteinExistence type="inferred from homology"/>
<gene>
    <name evidence="1" type="primary">fmt</name>
    <name type="ordered locus">MW1099</name>
</gene>